<reference key="1">
    <citation type="journal article" date="2007" name="PLoS ONE">
        <title>Analysis of the neurotoxin complex genes in Clostridium botulinum A1-A4 and B1 strains: BoNT/A3, /Ba4 and /B1 clusters are located within plasmids.</title>
        <authorList>
            <person name="Smith T.J."/>
            <person name="Hill K.K."/>
            <person name="Foley B.T."/>
            <person name="Detter J.C."/>
            <person name="Munk A.C."/>
            <person name="Bruce D.C."/>
            <person name="Doggett N.A."/>
            <person name="Smith L.A."/>
            <person name="Marks J.D."/>
            <person name="Xie G."/>
            <person name="Brettin T.S."/>
        </authorList>
    </citation>
    <scope>NUCLEOTIDE SEQUENCE [LARGE SCALE GENOMIC DNA]</scope>
    <source>
        <strain>ATCC 19397 / Type A</strain>
    </source>
</reference>
<dbReference type="EMBL" id="CP000726">
    <property type="protein sequence ID" value="ABS33060.1"/>
    <property type="molecule type" value="Genomic_DNA"/>
</dbReference>
<dbReference type="RefSeq" id="WP_011986541.1">
    <property type="nucleotide sequence ID" value="NC_009697.1"/>
</dbReference>
<dbReference type="SMR" id="A7FV66"/>
<dbReference type="KEGG" id="cba:CLB_1949"/>
<dbReference type="HOGENOM" id="CLU_051840_0_0_9"/>
<dbReference type="GO" id="GO:0080146">
    <property type="term" value="F:L-cysteine desulfhydrase activity"/>
    <property type="evidence" value="ECO:0007669"/>
    <property type="project" value="TreeGrafter"/>
</dbReference>
<dbReference type="GO" id="GO:0019450">
    <property type="term" value="P:L-cysteine catabolic process to pyruvate"/>
    <property type="evidence" value="ECO:0007669"/>
    <property type="project" value="TreeGrafter"/>
</dbReference>
<dbReference type="HAMAP" id="MF_01845">
    <property type="entry name" value="UPF0597"/>
    <property type="match status" value="1"/>
</dbReference>
<dbReference type="InterPro" id="IPR005130">
    <property type="entry name" value="Ser_deHydtase-like_asu"/>
</dbReference>
<dbReference type="InterPro" id="IPR021144">
    <property type="entry name" value="UPF0597"/>
</dbReference>
<dbReference type="PANTHER" id="PTHR30501">
    <property type="entry name" value="UPF0597 PROTEIN YHAM"/>
    <property type="match status" value="1"/>
</dbReference>
<dbReference type="PANTHER" id="PTHR30501:SF2">
    <property type="entry name" value="UPF0597 PROTEIN YHAM"/>
    <property type="match status" value="1"/>
</dbReference>
<dbReference type="Pfam" id="PF03313">
    <property type="entry name" value="SDH_alpha"/>
    <property type="match status" value="1"/>
</dbReference>
<dbReference type="PIRSF" id="PIRSF006054">
    <property type="entry name" value="UCP006054"/>
    <property type="match status" value="1"/>
</dbReference>
<proteinExistence type="inferred from homology"/>
<comment type="similarity">
    <text evidence="1">Belongs to the UPF0597 family.</text>
</comment>
<sequence>MSRLSKEEISERLLELIKDETKPAIGCTEPVAVAFTVATGKKYMAGEVLKIDLKVSKNILKNGKSVTIPNTEVCGLDIAGALGEICGDPEEGLFVFRNVNNEYLDKAKEMIKNKVVTLNPIENTDPVFVEATLKGEQDEVIAILKGGHTNIEKVIVNGKIAFEKDNKNKKDNKDCDFIKELSLKDIRQITEDISIEKLDFIMDGIEMNKEAAKEGLKRQKGLTLGSSLLKLQEEGKIGKDSATIARILTAAGSDLRMGGGMCPIMTSGGSGNQGLCVILPINVVAEDIKAPKERLQRAVFFGHAVNNFVKKYTGKLSAICGCAIAAGIGATAGIAWLLGGKDKEIEGAILNMLANLTGMVCDGAKGSCAIKLSTSASEAVISAYLALNDIIVPNNTGIIGNTVEDTINNLGMLCKDGFYKADDVMLSIACKEVI</sequence>
<organism>
    <name type="scientific">Clostridium botulinum (strain ATCC 19397 / Type A)</name>
    <dbReference type="NCBI Taxonomy" id="441770"/>
    <lineage>
        <taxon>Bacteria</taxon>
        <taxon>Bacillati</taxon>
        <taxon>Bacillota</taxon>
        <taxon>Clostridia</taxon>
        <taxon>Eubacteriales</taxon>
        <taxon>Clostridiaceae</taxon>
        <taxon>Clostridium</taxon>
    </lineage>
</organism>
<evidence type="ECO:0000255" key="1">
    <source>
        <dbReference type="HAMAP-Rule" id="MF_01845"/>
    </source>
</evidence>
<protein>
    <recommendedName>
        <fullName evidence="1">UPF0597 protein CLB_1949</fullName>
    </recommendedName>
</protein>
<name>Y1949_CLOB1</name>
<feature type="chain" id="PRO_0000339791" description="UPF0597 protein CLB_1949">
    <location>
        <begin position="1"/>
        <end position="434"/>
    </location>
</feature>
<accession>A7FV66</accession>
<gene>
    <name type="ordered locus">CLB_1949</name>
</gene>